<organism>
    <name type="scientific">Drosophila erecta</name>
    <name type="common">Fruit fly</name>
    <dbReference type="NCBI Taxonomy" id="7220"/>
    <lineage>
        <taxon>Eukaryota</taxon>
        <taxon>Metazoa</taxon>
        <taxon>Ecdysozoa</taxon>
        <taxon>Arthropoda</taxon>
        <taxon>Hexapoda</taxon>
        <taxon>Insecta</taxon>
        <taxon>Pterygota</taxon>
        <taxon>Neoptera</taxon>
        <taxon>Endopterygota</taxon>
        <taxon>Diptera</taxon>
        <taxon>Brachycera</taxon>
        <taxon>Muscomorpha</taxon>
        <taxon>Ephydroidea</taxon>
        <taxon>Drosophilidae</taxon>
        <taxon>Drosophila</taxon>
        <taxon>Sophophora</taxon>
    </lineage>
</organism>
<gene>
    <name type="ORF">GG17526</name>
</gene>
<protein>
    <recommendedName>
        <fullName evidence="1">NFU1 iron-sulfur cluster scaffold homolog, mitochondrial</fullName>
    </recommendedName>
</protein>
<reference evidence="4" key="1">
    <citation type="journal article" date="2007" name="Nature">
        <title>Evolution of genes and genomes on the Drosophila phylogeny.</title>
        <authorList>
            <consortium name="Drosophila 12 genomes consortium"/>
        </authorList>
    </citation>
    <scope>NUCLEOTIDE SEQUENCE [LARGE SCALE GENOMIC DNA]</scope>
    <source>
        <strain evidence="4">Tucson 14021-0224.01</strain>
    </source>
</reference>
<dbReference type="EMBL" id="CH954180">
    <property type="protein sequence ID" value="EDV47636.1"/>
    <property type="molecule type" value="Genomic_DNA"/>
</dbReference>
<dbReference type="SMR" id="B3NYF7"/>
<dbReference type="EnsemblMetazoa" id="FBtr0137580">
    <property type="protein sequence ID" value="FBpp0136072"/>
    <property type="gene ID" value="FBgn0109751"/>
</dbReference>
<dbReference type="EnsemblMetazoa" id="XM_001978673.3">
    <property type="protein sequence ID" value="XP_001978709.1"/>
    <property type="gene ID" value="LOC6549660"/>
</dbReference>
<dbReference type="GeneID" id="6549660"/>
<dbReference type="KEGG" id="der:6549660"/>
<dbReference type="eggNOG" id="KOG2358">
    <property type="taxonomic scope" value="Eukaryota"/>
</dbReference>
<dbReference type="HOGENOM" id="CLU_060555_0_2_1"/>
<dbReference type="OMA" id="AIMEHYM"/>
<dbReference type="OrthoDB" id="565552at2759"/>
<dbReference type="PhylomeDB" id="B3NYF7"/>
<dbReference type="Proteomes" id="UP000008711">
    <property type="component" value="Unassembled WGS sequence"/>
</dbReference>
<dbReference type="GO" id="GO:0005739">
    <property type="term" value="C:mitochondrion"/>
    <property type="evidence" value="ECO:0007669"/>
    <property type="project" value="UniProtKB-SubCell"/>
</dbReference>
<dbReference type="GO" id="GO:0005506">
    <property type="term" value="F:iron ion binding"/>
    <property type="evidence" value="ECO:0007669"/>
    <property type="project" value="InterPro"/>
</dbReference>
<dbReference type="GO" id="GO:0051536">
    <property type="term" value="F:iron-sulfur cluster binding"/>
    <property type="evidence" value="ECO:0007669"/>
    <property type="project" value="UniProtKB-KW"/>
</dbReference>
<dbReference type="GO" id="GO:0016226">
    <property type="term" value="P:iron-sulfur cluster assembly"/>
    <property type="evidence" value="ECO:0007669"/>
    <property type="project" value="InterPro"/>
</dbReference>
<dbReference type="FunFam" id="3.30.300.130:FF:000001">
    <property type="entry name" value="NFU1 iron-sulfur cluster scaffold"/>
    <property type="match status" value="1"/>
</dbReference>
<dbReference type="FunFam" id="3.30.1370.70:FF:000002">
    <property type="entry name" value="NFU1 iron-sulfur cluster scaffold homolog, mitochondrial"/>
    <property type="match status" value="1"/>
</dbReference>
<dbReference type="Gene3D" id="3.30.300.130">
    <property type="entry name" value="Fe-S cluster assembly (FSCA)"/>
    <property type="match status" value="1"/>
</dbReference>
<dbReference type="Gene3D" id="3.30.1370.70">
    <property type="entry name" value="Scaffold protein Nfu/NifU, N-terminal domain"/>
    <property type="match status" value="1"/>
</dbReference>
<dbReference type="InterPro" id="IPR034904">
    <property type="entry name" value="FSCA_dom_sf"/>
</dbReference>
<dbReference type="InterPro" id="IPR014824">
    <property type="entry name" value="Nfu/NifU_N"/>
</dbReference>
<dbReference type="InterPro" id="IPR036498">
    <property type="entry name" value="Nfu/NifU_N_sf"/>
</dbReference>
<dbReference type="InterPro" id="IPR001075">
    <property type="entry name" value="NIF_FeS_clus_asmbl_NifU_C"/>
</dbReference>
<dbReference type="InterPro" id="IPR000629">
    <property type="entry name" value="RNA-helicase_DEAD-box_CS"/>
</dbReference>
<dbReference type="PANTHER" id="PTHR11178">
    <property type="entry name" value="IRON-SULFUR CLUSTER SCAFFOLD PROTEIN NFU-RELATED"/>
    <property type="match status" value="1"/>
</dbReference>
<dbReference type="PANTHER" id="PTHR11178:SF1">
    <property type="entry name" value="NFU1 IRON-SULFUR CLUSTER SCAFFOLD HOMOLOG, MITOCHONDRIAL"/>
    <property type="match status" value="1"/>
</dbReference>
<dbReference type="Pfam" id="PF08712">
    <property type="entry name" value="Nfu_N"/>
    <property type="match status" value="1"/>
</dbReference>
<dbReference type="Pfam" id="PF01106">
    <property type="entry name" value="NifU"/>
    <property type="match status" value="1"/>
</dbReference>
<dbReference type="SMART" id="SM00932">
    <property type="entry name" value="Nfu_N"/>
    <property type="match status" value="1"/>
</dbReference>
<dbReference type="SUPFAM" id="SSF117916">
    <property type="entry name" value="Fe-S cluster assembly (FSCA) domain-like"/>
    <property type="match status" value="1"/>
</dbReference>
<dbReference type="SUPFAM" id="SSF110836">
    <property type="entry name" value="Hypothetical protein SAV1430"/>
    <property type="match status" value="1"/>
</dbReference>
<name>NFU1_DROER</name>
<evidence type="ECO:0000250" key="1">
    <source>
        <dbReference type="UniProtKB" id="Q9UMS0"/>
    </source>
</evidence>
<evidence type="ECO:0000255" key="2"/>
<evidence type="ECO:0000305" key="3"/>
<evidence type="ECO:0000312" key="4">
    <source>
        <dbReference type="EMBL" id="EDV47636.1"/>
    </source>
</evidence>
<keyword id="KW-0408">Iron</keyword>
<keyword id="KW-0411">Iron-sulfur</keyword>
<keyword id="KW-0479">Metal-binding</keyword>
<keyword id="KW-0496">Mitochondrion</keyword>
<keyword id="KW-0809">Transit peptide</keyword>
<comment type="function">
    <text evidence="1">Molecular scaffold for [Fe-S] cluster assembly of mitochondrial iron-sulfur proteins.</text>
</comment>
<comment type="subcellular location">
    <subcellularLocation>
        <location evidence="2">Mitochondrion</location>
    </subcellularLocation>
</comment>
<comment type="similarity">
    <text evidence="3">Belongs to the NifU family.</text>
</comment>
<proteinExistence type="inferred from homology"/>
<sequence>MSKFLSQAALNTLRNTRLGSRQLVRSFAGIASTRNHREPAHQEPGCGQALGRGLLQMRLPVAGRRSMFIQTQDTPNPDSLKFLPGVDVLGKGNTYDFPNGTTAHSSPLAKLLFRVEGVKGVFFGADFVTISKQEGAEWSLIKPEVFAVIMDFFASGLPVLHDAQPNADTEILEDDDETVMMIKELLDTRIRPTVQEDGGDIVFMGYEAGVVKLKMQGSCSSCPSSIVTLKNGVQNMLQFYIPEVESVEQVFDEADRMIDSEFERFEKNLKTLKQQEPSGAGPH</sequence>
<accession>B3NYF7</accession>
<feature type="transit peptide" description="Mitochondrion" evidence="2">
    <location>
        <begin position="1"/>
        <end position="30"/>
    </location>
</feature>
<feature type="chain" id="PRO_0000388696" description="NFU1 iron-sulfur cluster scaffold homolog, mitochondrial" evidence="2">
    <location>
        <begin position="31"/>
        <end position="283"/>
    </location>
</feature>
<feature type="region of interest" description="NifU" evidence="2">
    <location>
        <begin position="182"/>
        <end position="250"/>
    </location>
</feature>
<feature type="binding site" evidence="1">
    <location>
        <position position="219"/>
    </location>
    <ligand>
        <name>[4Fe-4S] cluster</name>
        <dbReference type="ChEBI" id="CHEBI:49883"/>
        <note>ligand shared between dimeric partners</note>
    </ligand>
</feature>
<feature type="binding site" evidence="1">
    <location>
        <position position="222"/>
    </location>
    <ligand>
        <name>[4Fe-4S] cluster</name>
        <dbReference type="ChEBI" id="CHEBI:49883"/>
        <note>ligand shared between dimeric partners</note>
    </ligand>
</feature>